<protein>
    <recommendedName>
        <fullName>Putative trans-acting enoyl reductase MT2525</fullName>
        <ecNumber>1.3.1.-</ecNumber>
    </recommendedName>
</protein>
<feature type="chain" id="PRO_0000396095" description="Putative trans-acting enoyl reductase MT2525">
    <location>
        <begin position="1"/>
        <end position="419"/>
    </location>
</feature>
<feature type="transmembrane region" description="Helical" evidence="2">
    <location>
        <begin position="284"/>
        <end position="304"/>
    </location>
</feature>
<feature type="region of interest" description="Disordered" evidence="3">
    <location>
        <begin position="197"/>
        <end position="232"/>
    </location>
</feature>
<feature type="cross-link" description="Isoglutamyl lysine isopeptide (Lys-Gln) (interchain with Q-Cter in protein Pup)" evidence="1">
    <location>
        <position position="127"/>
    </location>
</feature>
<dbReference type="EC" id="1.3.1.-"/>
<dbReference type="EMBL" id="AE000516">
    <property type="protein sequence ID" value="AAK46824.1"/>
    <property type="status" value="ALT_INIT"/>
    <property type="molecule type" value="Genomic_DNA"/>
</dbReference>
<dbReference type="RefSeq" id="WP_003412609.1">
    <property type="nucleotide sequence ID" value="NZ_KK341227.1"/>
</dbReference>
<dbReference type="SMR" id="Q7D745"/>
<dbReference type="KEGG" id="mtc:MT2525"/>
<dbReference type="PATRIC" id="fig|83331.31.peg.2724"/>
<dbReference type="HOGENOM" id="CLU_031002_0_2_11"/>
<dbReference type="Proteomes" id="UP000001020">
    <property type="component" value="Chromosome"/>
</dbReference>
<dbReference type="GO" id="GO:0005886">
    <property type="term" value="C:plasma membrane"/>
    <property type="evidence" value="ECO:0007669"/>
    <property type="project" value="UniProtKB-SubCell"/>
</dbReference>
<dbReference type="GO" id="GO:0016491">
    <property type="term" value="F:oxidoreductase activity"/>
    <property type="evidence" value="ECO:0007669"/>
    <property type="project" value="UniProtKB-KW"/>
</dbReference>
<dbReference type="GO" id="GO:0009247">
    <property type="term" value="P:glycolipid biosynthetic process"/>
    <property type="evidence" value="ECO:0007669"/>
    <property type="project" value="TreeGrafter"/>
</dbReference>
<dbReference type="FunFam" id="3.40.50.720:FF:000413">
    <property type="entry name" value="Trans-acting enoyl reductase"/>
    <property type="match status" value="1"/>
</dbReference>
<dbReference type="Gene3D" id="3.40.50.720">
    <property type="entry name" value="NAD(P)-binding Rossmann-like Domain"/>
    <property type="match status" value="1"/>
</dbReference>
<dbReference type="InterPro" id="IPR036291">
    <property type="entry name" value="NAD(P)-bd_dom_sf"/>
</dbReference>
<dbReference type="InterPro" id="IPR051276">
    <property type="entry name" value="Saccharopine_DH-like_oxidrdct"/>
</dbReference>
<dbReference type="InterPro" id="IPR005097">
    <property type="entry name" value="Sacchrp_dh_NADP-bd"/>
</dbReference>
<dbReference type="PANTHER" id="PTHR12286">
    <property type="entry name" value="SACCHAROPINE DEHYDROGENASE-LIKE OXIDOREDUCTASE"/>
    <property type="match status" value="1"/>
</dbReference>
<dbReference type="PANTHER" id="PTHR12286:SF5">
    <property type="entry name" value="SACCHAROPINE DEHYDROGENASE-LIKE OXIDOREDUCTASE"/>
    <property type="match status" value="1"/>
</dbReference>
<dbReference type="Pfam" id="PF03435">
    <property type="entry name" value="Sacchrp_dh_NADP"/>
    <property type="match status" value="1"/>
</dbReference>
<dbReference type="SUPFAM" id="SSF51735">
    <property type="entry name" value="NAD(P)-binding Rossmann-fold domains"/>
    <property type="match status" value="1"/>
</dbReference>
<accession>Q7D745</accession>
<organism>
    <name type="scientific">Mycobacterium tuberculosis (strain CDC 1551 / Oshkosh)</name>
    <dbReference type="NCBI Taxonomy" id="83331"/>
    <lineage>
        <taxon>Bacteria</taxon>
        <taxon>Bacillati</taxon>
        <taxon>Actinomycetota</taxon>
        <taxon>Actinomycetes</taxon>
        <taxon>Mycobacteriales</taxon>
        <taxon>Mycobacteriaceae</taxon>
        <taxon>Mycobacterium</taxon>
        <taxon>Mycobacterium tuberculosis complex</taxon>
    </lineage>
</organism>
<gene>
    <name type="ordered locus">MT2525</name>
</gene>
<reference key="1">
    <citation type="journal article" date="2002" name="J. Bacteriol.">
        <title>Whole-genome comparison of Mycobacterium tuberculosis clinical and laboratory strains.</title>
        <authorList>
            <person name="Fleischmann R.D."/>
            <person name="Alland D."/>
            <person name="Eisen J.A."/>
            <person name="Carpenter L."/>
            <person name="White O."/>
            <person name="Peterson J.D."/>
            <person name="DeBoy R.T."/>
            <person name="Dodson R.J."/>
            <person name="Gwinn M.L."/>
            <person name="Haft D.H."/>
            <person name="Hickey E.K."/>
            <person name="Kolonay J.F."/>
            <person name="Nelson W.C."/>
            <person name="Umayam L.A."/>
            <person name="Ermolaeva M.D."/>
            <person name="Salzberg S.L."/>
            <person name="Delcher A."/>
            <person name="Utterback T.R."/>
            <person name="Weidman J.F."/>
            <person name="Khouri H.M."/>
            <person name="Gill J."/>
            <person name="Mikula A."/>
            <person name="Bishai W."/>
            <person name="Jacobs W.R. Jr."/>
            <person name="Venter J.C."/>
            <person name="Fraser C.M."/>
        </authorList>
    </citation>
    <scope>NUCLEOTIDE SEQUENCE [LARGE SCALE GENOMIC DNA]</scope>
    <source>
        <strain>CDC 1551 / Oshkosh</strain>
    </source>
</reference>
<name>Y2525_MYCTO</name>
<proteinExistence type="inferred from homology"/>
<sequence length="419" mass="44379">MTATPREFDIVLYGATGFVGKLTAEYLARAGGDARIALAGRSTQRVLAVREALGESAQTWPILTADASLPSTLQAMAARAQVVVTTVGPYTRYGLPLVAACAAAGTDYADLTGEPMFMRNSIDLYHKQAADTGARIVHACGFDSVPSDLSVYALYHAAREDGAGELTDTNCVVRSFKGGFSGGTIASMLEVLSTASNDPDARRQLSDPYMLSPDRGAEPELGPQPDLPSRRGRRLAPELAGVWTAGFIMAPTNTRIVRRSNALLDWAYGRRFRYSETMSVGSTVLAPVVSVVGGGVGNAMFGLASRYIRLLPRGLVKRVVPKPGTGPSAAARERGYYRIETYTTTTTGARYLARMAQDGDPGYKATSVLLGECGLALALDRDKLSDMRGVLTPAAAMGDALLERLPAAGVSLQTTRLAS</sequence>
<comment type="subcellular location">
    <subcellularLocation>
        <location evidence="4">Cell membrane</location>
        <topology evidence="4">Single-pass membrane protein</topology>
    </subcellularLocation>
</comment>
<comment type="similarity">
    <text evidence="4">Belongs to the saccharopine dehydrogenase family. Enoyl reductase subfamily.</text>
</comment>
<comment type="sequence caution" evidence="4">
    <conflict type="erroneous initiation">
        <sequence resource="EMBL-CDS" id="AAK46824"/>
    </conflict>
    <text>Extended N-terminus.</text>
</comment>
<keyword id="KW-1003">Cell membrane</keyword>
<keyword id="KW-1017">Isopeptide bond</keyword>
<keyword id="KW-0472">Membrane</keyword>
<keyword id="KW-0560">Oxidoreductase</keyword>
<keyword id="KW-1185">Reference proteome</keyword>
<keyword id="KW-0812">Transmembrane</keyword>
<keyword id="KW-1133">Transmembrane helix</keyword>
<keyword id="KW-0832">Ubl conjugation</keyword>
<evidence type="ECO:0000250" key="1"/>
<evidence type="ECO:0000255" key="2"/>
<evidence type="ECO:0000256" key="3">
    <source>
        <dbReference type="SAM" id="MobiDB-lite"/>
    </source>
</evidence>
<evidence type="ECO:0000305" key="4"/>